<keyword id="KW-0067">ATP-binding</keyword>
<keyword id="KW-0238">DNA-binding</keyword>
<keyword id="KW-0547">Nucleotide-binding</keyword>
<keyword id="KW-0597">Phosphoprotein</keyword>
<keyword id="KW-0804">Transcription</keyword>
<keyword id="KW-0805">Transcription regulation</keyword>
<protein>
    <recommendedName>
        <fullName evidence="1">Anaerobic nitric oxide reductase transcription regulator NorR</fullName>
    </recommendedName>
</protein>
<gene>
    <name evidence="1" type="primary">norR</name>
    <name type="ordered locus">UTI89_C3071</name>
</gene>
<comment type="function">
    <text evidence="1">Required for the expression of anaerobic nitric oxide (NO) reductase, acts as a transcriptional activator for at least the norVW operon. Activation also requires sigma-54.</text>
</comment>
<comment type="pathway">
    <text evidence="1">Nitrogen metabolism; nitric oxide reduction.</text>
</comment>
<feature type="chain" id="PRO_0000305619" description="Anaerobic nitric oxide reductase transcription regulator NorR">
    <location>
        <begin position="1"/>
        <end position="504"/>
    </location>
</feature>
<feature type="domain" description="Sigma-54 factor interaction" evidence="1">
    <location>
        <begin position="187"/>
        <end position="416"/>
    </location>
</feature>
<feature type="DNA-binding region" description="H-T-H motif" evidence="1">
    <location>
        <begin position="479"/>
        <end position="498"/>
    </location>
</feature>
<feature type="binding site" evidence="1">
    <location>
        <begin position="215"/>
        <end position="222"/>
    </location>
    <ligand>
        <name>ATP</name>
        <dbReference type="ChEBI" id="CHEBI:30616"/>
    </ligand>
</feature>
<feature type="binding site" evidence="1">
    <location>
        <begin position="278"/>
        <end position="287"/>
    </location>
    <ligand>
        <name>ATP</name>
        <dbReference type="ChEBI" id="CHEBI:30616"/>
    </ligand>
</feature>
<feature type="modified residue" description="4-aspartylphosphate" evidence="1">
    <location>
        <position position="57"/>
    </location>
</feature>
<organism>
    <name type="scientific">Escherichia coli (strain UTI89 / UPEC)</name>
    <dbReference type="NCBI Taxonomy" id="364106"/>
    <lineage>
        <taxon>Bacteria</taxon>
        <taxon>Pseudomonadati</taxon>
        <taxon>Pseudomonadota</taxon>
        <taxon>Gammaproteobacteria</taxon>
        <taxon>Enterobacterales</taxon>
        <taxon>Enterobacteriaceae</taxon>
        <taxon>Escherichia</taxon>
    </lineage>
</organism>
<proteinExistence type="inferred from homology"/>
<sequence>MSFSVDVLANIAIELQRGIGHQDRFQRLITTLRQVLECDASALLRYDSRQFIPLAIDGLAKDVLGRRFALEGHPRLEAIARAGDVVRFPADSELPDPYDGLIPGQESLKVHACVGLPLFAGQNLIGALTLDGMQPDQFDVFSDEELRLIAALAAGALSNALLIEQLESQNMLPGDAAPFEAVKQTQMIGLSPGMTQLKKEIEIVAASDLNVLISGETGTGKELVAKAIHEASPRAVNPLVYLNCAALPESVAESELFGHVKGAFTGAISNRSGKFEMADNGTLFLDEIGELSLALQAKLLRVLQYGDIQRVGDDRSLRVDVRVLAATNRDLREEVLAGRFRADLFHRLSVFPLSVPPLRERGDDVILLAGYFCEQCRLRLGLSRVVLSAGARNLLQHYNFPGNVRELEHAIHRAVVLSRATRSGDEVILEAQHFAFPEVTLPPPEAAAVPVVKQNLREATEAFQRETIRQALAQNHHNWAACARMLETDVANLHRLAKRLGLKD</sequence>
<dbReference type="EMBL" id="CP000243">
    <property type="protein sequence ID" value="ABE08523.1"/>
    <property type="molecule type" value="Genomic_DNA"/>
</dbReference>
<dbReference type="RefSeq" id="WP_000010727.1">
    <property type="nucleotide sequence ID" value="NZ_CP064825.1"/>
</dbReference>
<dbReference type="SMR" id="Q1R7Z1"/>
<dbReference type="KEGG" id="eci:UTI89_C3071"/>
<dbReference type="HOGENOM" id="CLU_000445_125_0_6"/>
<dbReference type="UniPathway" id="UPA00638"/>
<dbReference type="Proteomes" id="UP000001952">
    <property type="component" value="Chromosome"/>
</dbReference>
<dbReference type="GO" id="GO:0005524">
    <property type="term" value="F:ATP binding"/>
    <property type="evidence" value="ECO:0007669"/>
    <property type="project" value="UniProtKB-UniRule"/>
</dbReference>
<dbReference type="GO" id="GO:0016887">
    <property type="term" value="F:ATP hydrolysis activity"/>
    <property type="evidence" value="ECO:0007669"/>
    <property type="project" value="InterPro"/>
</dbReference>
<dbReference type="GO" id="GO:0003677">
    <property type="term" value="F:DNA binding"/>
    <property type="evidence" value="ECO:0007669"/>
    <property type="project" value="UniProtKB-KW"/>
</dbReference>
<dbReference type="GO" id="GO:0003700">
    <property type="term" value="F:DNA-binding transcription factor activity"/>
    <property type="evidence" value="ECO:0007669"/>
    <property type="project" value="UniProtKB-UniRule"/>
</dbReference>
<dbReference type="GO" id="GO:0000160">
    <property type="term" value="P:phosphorelay signal transduction system"/>
    <property type="evidence" value="ECO:0007669"/>
    <property type="project" value="UniProtKB-UniRule"/>
</dbReference>
<dbReference type="CDD" id="cd00009">
    <property type="entry name" value="AAA"/>
    <property type="match status" value="1"/>
</dbReference>
<dbReference type="FunFam" id="1.10.10.60:FF:000188">
    <property type="entry name" value="Anaerobic nitric oxide reductase transcription regulator NorR"/>
    <property type="match status" value="1"/>
</dbReference>
<dbReference type="FunFam" id="1.10.8.60:FF:000045">
    <property type="entry name" value="Anaerobic nitric oxide reductase transcription regulator NorR"/>
    <property type="match status" value="1"/>
</dbReference>
<dbReference type="FunFam" id="3.30.450.40:FF:000021">
    <property type="entry name" value="Anaerobic nitric oxide reductase transcription regulator NorR"/>
    <property type="match status" value="1"/>
</dbReference>
<dbReference type="FunFam" id="3.40.50.300:FF:000006">
    <property type="entry name" value="DNA-binding transcriptional regulator NtrC"/>
    <property type="match status" value="1"/>
</dbReference>
<dbReference type="Gene3D" id="1.10.8.60">
    <property type="match status" value="1"/>
</dbReference>
<dbReference type="Gene3D" id="3.30.450.40">
    <property type="match status" value="1"/>
</dbReference>
<dbReference type="Gene3D" id="1.10.10.60">
    <property type="entry name" value="Homeodomain-like"/>
    <property type="match status" value="1"/>
</dbReference>
<dbReference type="Gene3D" id="3.40.50.300">
    <property type="entry name" value="P-loop containing nucleotide triphosphate hydrolases"/>
    <property type="match status" value="1"/>
</dbReference>
<dbReference type="HAMAP" id="MF_01314">
    <property type="entry name" value="NorR"/>
    <property type="match status" value="1"/>
</dbReference>
<dbReference type="InterPro" id="IPR003593">
    <property type="entry name" value="AAA+_ATPase"/>
</dbReference>
<dbReference type="InterPro" id="IPR003018">
    <property type="entry name" value="GAF"/>
</dbReference>
<dbReference type="InterPro" id="IPR029016">
    <property type="entry name" value="GAF-like_dom_sf"/>
</dbReference>
<dbReference type="InterPro" id="IPR009057">
    <property type="entry name" value="Homeodomain-like_sf"/>
</dbReference>
<dbReference type="InterPro" id="IPR023944">
    <property type="entry name" value="NorR"/>
</dbReference>
<dbReference type="InterPro" id="IPR027417">
    <property type="entry name" value="P-loop_NTPase"/>
</dbReference>
<dbReference type="InterPro" id="IPR002078">
    <property type="entry name" value="Sigma_54_int"/>
</dbReference>
<dbReference type="InterPro" id="IPR025662">
    <property type="entry name" value="Sigma_54_int_dom_ATP-bd_1"/>
</dbReference>
<dbReference type="InterPro" id="IPR025943">
    <property type="entry name" value="Sigma_54_int_dom_ATP-bd_2"/>
</dbReference>
<dbReference type="InterPro" id="IPR025944">
    <property type="entry name" value="Sigma_54_int_dom_CS"/>
</dbReference>
<dbReference type="NCBIfam" id="NF003451">
    <property type="entry name" value="PRK05022.1"/>
    <property type="match status" value="1"/>
</dbReference>
<dbReference type="PANTHER" id="PTHR32071:SF35">
    <property type="entry name" value="ANAEROBIC NITRIC OXIDE REDUCTASE TRANSCRIPTION REGULATOR NORR"/>
    <property type="match status" value="1"/>
</dbReference>
<dbReference type="PANTHER" id="PTHR32071">
    <property type="entry name" value="TRANSCRIPTIONAL REGULATORY PROTEIN"/>
    <property type="match status" value="1"/>
</dbReference>
<dbReference type="Pfam" id="PF01590">
    <property type="entry name" value="GAF"/>
    <property type="match status" value="1"/>
</dbReference>
<dbReference type="Pfam" id="PF00158">
    <property type="entry name" value="Sigma54_activat"/>
    <property type="match status" value="1"/>
</dbReference>
<dbReference type="SMART" id="SM00382">
    <property type="entry name" value="AAA"/>
    <property type="match status" value="1"/>
</dbReference>
<dbReference type="SMART" id="SM00065">
    <property type="entry name" value="GAF"/>
    <property type="match status" value="1"/>
</dbReference>
<dbReference type="SUPFAM" id="SSF55781">
    <property type="entry name" value="GAF domain-like"/>
    <property type="match status" value="1"/>
</dbReference>
<dbReference type="SUPFAM" id="SSF46689">
    <property type="entry name" value="Homeodomain-like"/>
    <property type="match status" value="1"/>
</dbReference>
<dbReference type="SUPFAM" id="SSF52540">
    <property type="entry name" value="P-loop containing nucleoside triphosphate hydrolases"/>
    <property type="match status" value="1"/>
</dbReference>
<dbReference type="PROSITE" id="PS00675">
    <property type="entry name" value="SIGMA54_INTERACT_1"/>
    <property type="match status" value="1"/>
</dbReference>
<dbReference type="PROSITE" id="PS00676">
    <property type="entry name" value="SIGMA54_INTERACT_2"/>
    <property type="match status" value="1"/>
</dbReference>
<dbReference type="PROSITE" id="PS00688">
    <property type="entry name" value="SIGMA54_INTERACT_3"/>
    <property type="match status" value="1"/>
</dbReference>
<dbReference type="PROSITE" id="PS50045">
    <property type="entry name" value="SIGMA54_INTERACT_4"/>
    <property type="match status" value="1"/>
</dbReference>
<accession>Q1R7Z1</accession>
<reference key="1">
    <citation type="journal article" date="2006" name="Proc. Natl. Acad. Sci. U.S.A.">
        <title>Identification of genes subject to positive selection in uropathogenic strains of Escherichia coli: a comparative genomics approach.</title>
        <authorList>
            <person name="Chen S.L."/>
            <person name="Hung C.-S."/>
            <person name="Xu J."/>
            <person name="Reigstad C.S."/>
            <person name="Magrini V."/>
            <person name="Sabo A."/>
            <person name="Blasiar D."/>
            <person name="Bieri T."/>
            <person name="Meyer R.R."/>
            <person name="Ozersky P."/>
            <person name="Armstrong J.R."/>
            <person name="Fulton R.S."/>
            <person name="Latreille J.P."/>
            <person name="Spieth J."/>
            <person name="Hooton T.M."/>
            <person name="Mardis E.R."/>
            <person name="Hultgren S.J."/>
            <person name="Gordon J.I."/>
        </authorList>
    </citation>
    <scope>NUCLEOTIDE SEQUENCE [LARGE SCALE GENOMIC DNA]</scope>
    <source>
        <strain>UTI89 / UPEC</strain>
    </source>
</reference>
<evidence type="ECO:0000255" key="1">
    <source>
        <dbReference type="HAMAP-Rule" id="MF_01314"/>
    </source>
</evidence>
<name>NORR_ECOUT</name>